<feature type="signal peptide" evidence="1">
    <location>
        <begin position="1"/>
        <end position="20"/>
    </location>
</feature>
<feature type="chain" id="PRO_0000017871" description="Apolipoprotein D">
    <location>
        <begin position="21"/>
        <end position="189"/>
    </location>
</feature>
<feature type="modified residue" description="Pyrrolidone carboxylic acid" evidence="2">
    <location>
        <position position="21"/>
    </location>
</feature>
<feature type="glycosylation site" description="N-linked (GlcNAc...) asparagine" evidence="3">
    <location>
        <position position="65"/>
    </location>
</feature>
<feature type="glycosylation site" description="N-linked (GlcNAc...) asparagine" evidence="3">
    <location>
        <position position="98"/>
    </location>
</feature>
<feature type="disulfide bond" evidence="1">
    <location>
        <begin position="28"/>
        <end position="134"/>
    </location>
</feature>
<feature type="disulfide bond" evidence="1">
    <location>
        <begin position="61"/>
        <end position="185"/>
    </location>
</feature>
<proteinExistence type="evidence at transcript level"/>
<comment type="function">
    <text>APOD occurs in the macromolecular complex with lecithin-transport and binding of bilin. Appears to be able to transport a variety of ligands in a number of different contexts.</text>
</comment>
<comment type="subunit">
    <text evidence="1">Homodimer.</text>
</comment>
<comment type="subcellular location">
    <subcellularLocation>
        <location>Secreted</location>
    </subcellularLocation>
</comment>
<comment type="similarity">
    <text evidence="4">Belongs to the calycin superfamily. Lipocalin family.</text>
</comment>
<accession>P51909</accession>
<gene>
    <name type="primary">APOD</name>
</gene>
<evidence type="ECO:0000250" key="1"/>
<evidence type="ECO:0000250" key="2">
    <source>
        <dbReference type="UniProtKB" id="P05090"/>
    </source>
</evidence>
<evidence type="ECO:0000255" key="3"/>
<evidence type="ECO:0000305" key="4"/>
<sequence length="189" mass="21610">MGMMLLLLSMLAGLVAEAEGQAFHFGKCPNPPVQENFDLNKYLGRWYEIEKIPVSFEKGNCIQANYSLKENGRVKVLNQELRPDGTVNQIEGEATHSNITEPAKLGVKFFQLMPSAPYWVLATDYDNYALVYSCTNIIWLFHVDHIWILGRNRYLPQETVTYLKDILTSNNIDIEKMTLTDQANCPDFL</sequence>
<keyword id="KW-1015">Disulfide bond</keyword>
<keyword id="KW-0325">Glycoprotein</keyword>
<keyword id="KW-0446">Lipid-binding</keyword>
<keyword id="KW-0873">Pyrrolidone carboxylic acid</keyword>
<keyword id="KW-1185">Reference proteome</keyword>
<keyword id="KW-0964">Secreted</keyword>
<keyword id="KW-0732">Signal</keyword>
<keyword id="KW-0813">Transport</keyword>
<reference key="1">
    <citation type="journal article" date="1995" name="Mol. Cell. Endocrinol.">
        <title>Guinea pig apolipoprotein D RNA diversity, and developmental and gestational modulation of mRNA levels.</title>
        <authorList>
            <person name="Provost P.R."/>
            <person name="Tremblay Y."/>
            <person name="El-Amine M."/>
            <person name="Belanger A."/>
        </authorList>
    </citation>
    <scope>NUCLEOTIDE SEQUENCE [MRNA]</scope>
    <source>
        <tissue>Adrenal gland</tissue>
    </source>
</reference>
<protein>
    <recommendedName>
        <fullName>Apolipoprotein D</fullName>
        <shortName>Apo-D</shortName>
        <shortName>ApoD</shortName>
    </recommendedName>
</protein>
<name>APOD_CAVPO</name>
<dbReference type="EMBL" id="S79402">
    <property type="protein sequence ID" value="AAB35199.1"/>
    <property type="molecule type" value="mRNA"/>
</dbReference>
<dbReference type="RefSeq" id="XP_003477147.1">
    <property type="nucleotide sequence ID" value="XM_003477099.3"/>
</dbReference>
<dbReference type="SMR" id="P51909"/>
<dbReference type="FunCoup" id="P51909">
    <property type="interactions" value="74"/>
</dbReference>
<dbReference type="STRING" id="10141.ENSCPOP00000003643"/>
<dbReference type="GlyCosmos" id="P51909">
    <property type="glycosylation" value="2 sites, No reported glycans"/>
</dbReference>
<dbReference type="Ensembl" id="ENSCPOT00000004082.3">
    <property type="protein sequence ID" value="ENSCPOP00000003643.2"/>
    <property type="gene ID" value="ENSCPOG00000004038.4"/>
</dbReference>
<dbReference type="GeneID" id="100735684"/>
<dbReference type="KEGG" id="cpoc:100735684"/>
<dbReference type="CTD" id="347"/>
<dbReference type="VEuPathDB" id="HostDB:ENSCPOG00000004038"/>
<dbReference type="eggNOG" id="KOG4824">
    <property type="taxonomic scope" value="Eukaryota"/>
</dbReference>
<dbReference type="GeneTree" id="ENSGT00510000046981"/>
<dbReference type="HOGENOM" id="CLU_068449_2_1_1"/>
<dbReference type="InParanoid" id="P51909"/>
<dbReference type="OMA" id="HKYLGRW"/>
<dbReference type="OrthoDB" id="565904at2759"/>
<dbReference type="TreeFam" id="TF324836"/>
<dbReference type="Proteomes" id="UP000005447">
    <property type="component" value="Unassembled WGS sequence"/>
</dbReference>
<dbReference type="Bgee" id="ENSCPOG00000004038">
    <property type="expression patterns" value="Expressed in ovary and 13 other cell types or tissues"/>
</dbReference>
<dbReference type="GO" id="GO:0022626">
    <property type="term" value="C:cytosolic ribosome"/>
    <property type="evidence" value="ECO:0000250"/>
    <property type="project" value="UniProtKB"/>
</dbReference>
<dbReference type="GO" id="GO:0030425">
    <property type="term" value="C:dendrite"/>
    <property type="evidence" value="ECO:0000250"/>
    <property type="project" value="UniProtKB"/>
</dbReference>
<dbReference type="GO" id="GO:0005615">
    <property type="term" value="C:extracellular space"/>
    <property type="evidence" value="ECO:0000250"/>
    <property type="project" value="UniProtKB"/>
</dbReference>
<dbReference type="GO" id="GO:0043025">
    <property type="term" value="C:neuronal cell body"/>
    <property type="evidence" value="ECO:0000250"/>
    <property type="project" value="UniProtKB"/>
</dbReference>
<dbReference type="GO" id="GO:0048471">
    <property type="term" value="C:perinuclear region of cytoplasm"/>
    <property type="evidence" value="ECO:0000250"/>
    <property type="project" value="UniProtKB"/>
</dbReference>
<dbReference type="GO" id="GO:0015485">
    <property type="term" value="F:cholesterol binding"/>
    <property type="evidence" value="ECO:0000250"/>
    <property type="project" value="UniProtKB"/>
</dbReference>
<dbReference type="GO" id="GO:0007420">
    <property type="term" value="P:brain development"/>
    <property type="evidence" value="ECO:0007669"/>
    <property type="project" value="InterPro"/>
</dbReference>
<dbReference type="GO" id="GO:0006006">
    <property type="term" value="P:glucose metabolic process"/>
    <property type="evidence" value="ECO:0000250"/>
    <property type="project" value="UniProtKB"/>
</dbReference>
<dbReference type="GO" id="GO:0006629">
    <property type="term" value="P:lipid metabolic process"/>
    <property type="evidence" value="ECO:0000250"/>
    <property type="project" value="UniProtKB"/>
</dbReference>
<dbReference type="GO" id="GO:0006869">
    <property type="term" value="P:lipid transport"/>
    <property type="evidence" value="ECO:0007669"/>
    <property type="project" value="InterPro"/>
</dbReference>
<dbReference type="GO" id="GO:1900016">
    <property type="term" value="P:negative regulation of cytokine production involved in inflammatory response"/>
    <property type="evidence" value="ECO:0000250"/>
    <property type="project" value="UniProtKB"/>
</dbReference>
<dbReference type="GO" id="GO:0051895">
    <property type="term" value="P:negative regulation of focal adhesion assembly"/>
    <property type="evidence" value="ECO:0000250"/>
    <property type="project" value="UniProtKB"/>
</dbReference>
<dbReference type="GO" id="GO:0060588">
    <property type="term" value="P:negative regulation of lipoprotein lipid oxidation"/>
    <property type="evidence" value="ECO:0000250"/>
    <property type="project" value="UniProtKB"/>
</dbReference>
<dbReference type="GO" id="GO:0071638">
    <property type="term" value="P:negative regulation of monocyte chemotactic protein-1 production"/>
    <property type="evidence" value="ECO:0000250"/>
    <property type="project" value="UniProtKB"/>
</dbReference>
<dbReference type="GO" id="GO:0010642">
    <property type="term" value="P:negative regulation of platelet-derived growth factor receptor signaling pathway"/>
    <property type="evidence" value="ECO:0000250"/>
    <property type="project" value="UniProtKB"/>
</dbReference>
<dbReference type="GO" id="GO:0042308">
    <property type="term" value="P:negative regulation of protein import into nucleus"/>
    <property type="evidence" value="ECO:0000250"/>
    <property type="project" value="UniProtKB"/>
</dbReference>
<dbReference type="GO" id="GO:0048662">
    <property type="term" value="P:negative regulation of smooth muscle cell proliferation"/>
    <property type="evidence" value="ECO:0000250"/>
    <property type="project" value="UniProtKB"/>
</dbReference>
<dbReference type="GO" id="GO:2000098">
    <property type="term" value="P:negative regulation of smooth muscle cell-matrix adhesion"/>
    <property type="evidence" value="ECO:0000250"/>
    <property type="project" value="UniProtKB"/>
</dbReference>
<dbReference type="GO" id="GO:2000405">
    <property type="term" value="P:negative regulation of T cell migration"/>
    <property type="evidence" value="ECO:0000250"/>
    <property type="project" value="UniProtKB"/>
</dbReference>
<dbReference type="GO" id="GO:0014012">
    <property type="term" value="P:peripheral nervous system axon regeneration"/>
    <property type="evidence" value="ECO:0000250"/>
    <property type="project" value="UniProtKB"/>
</dbReference>
<dbReference type="GO" id="GO:0048678">
    <property type="term" value="P:response to axon injury"/>
    <property type="evidence" value="ECO:0000250"/>
    <property type="project" value="UniProtKB"/>
</dbReference>
<dbReference type="GO" id="GO:0000302">
    <property type="term" value="P:response to reactive oxygen species"/>
    <property type="evidence" value="ECO:0000250"/>
    <property type="project" value="UniProtKB"/>
</dbReference>
<dbReference type="GO" id="GO:0042246">
    <property type="term" value="P:tissue regeneration"/>
    <property type="evidence" value="ECO:0000250"/>
    <property type="project" value="UniProtKB"/>
</dbReference>
<dbReference type="CDD" id="cd19437">
    <property type="entry name" value="lipocalin_apoD-like"/>
    <property type="match status" value="1"/>
</dbReference>
<dbReference type="FunFam" id="2.40.128.20:FF:000003">
    <property type="entry name" value="Apolipoprotein D"/>
    <property type="match status" value="1"/>
</dbReference>
<dbReference type="Gene3D" id="2.40.128.20">
    <property type="match status" value="1"/>
</dbReference>
<dbReference type="InterPro" id="IPR026222">
    <property type="entry name" value="ApoD_vertbrte"/>
</dbReference>
<dbReference type="InterPro" id="IPR002969">
    <property type="entry name" value="ApolipopD"/>
</dbReference>
<dbReference type="InterPro" id="IPR012674">
    <property type="entry name" value="Calycin"/>
</dbReference>
<dbReference type="InterPro" id="IPR022271">
    <property type="entry name" value="Lipocalin_ApoD"/>
</dbReference>
<dbReference type="InterPro" id="IPR022272">
    <property type="entry name" value="Lipocalin_CS"/>
</dbReference>
<dbReference type="InterPro" id="IPR000566">
    <property type="entry name" value="Lipocln_cytosolic_FA-bd_dom"/>
</dbReference>
<dbReference type="PANTHER" id="PTHR10612">
    <property type="entry name" value="APOLIPOPROTEIN D"/>
    <property type="match status" value="1"/>
</dbReference>
<dbReference type="PANTHER" id="PTHR10612:SF34">
    <property type="entry name" value="APOLIPOPROTEIN D"/>
    <property type="match status" value="1"/>
</dbReference>
<dbReference type="Pfam" id="PF00061">
    <property type="entry name" value="Lipocalin"/>
    <property type="match status" value="1"/>
</dbReference>
<dbReference type="PIRSF" id="PIRSF036893">
    <property type="entry name" value="Lipocalin_ApoD"/>
    <property type="match status" value="1"/>
</dbReference>
<dbReference type="PRINTS" id="PR02058">
    <property type="entry name" value="APODVERTBRTE"/>
</dbReference>
<dbReference type="PRINTS" id="PR01219">
    <property type="entry name" value="APOLIPOPROTD"/>
</dbReference>
<dbReference type="SUPFAM" id="SSF50814">
    <property type="entry name" value="Lipocalins"/>
    <property type="match status" value="1"/>
</dbReference>
<dbReference type="PROSITE" id="PS00213">
    <property type="entry name" value="LIPOCALIN"/>
    <property type="match status" value="1"/>
</dbReference>
<organism>
    <name type="scientific">Cavia porcellus</name>
    <name type="common">Guinea pig</name>
    <dbReference type="NCBI Taxonomy" id="10141"/>
    <lineage>
        <taxon>Eukaryota</taxon>
        <taxon>Metazoa</taxon>
        <taxon>Chordata</taxon>
        <taxon>Craniata</taxon>
        <taxon>Vertebrata</taxon>
        <taxon>Euteleostomi</taxon>
        <taxon>Mammalia</taxon>
        <taxon>Eutheria</taxon>
        <taxon>Euarchontoglires</taxon>
        <taxon>Glires</taxon>
        <taxon>Rodentia</taxon>
        <taxon>Hystricomorpha</taxon>
        <taxon>Caviidae</taxon>
        <taxon>Cavia</taxon>
    </lineage>
</organism>